<feature type="chain" id="PRO_0000090808" description="Probable acetolactate synthase large subunit">
    <location>
        <begin position="1"/>
        <end position="591"/>
    </location>
</feature>
<feature type="region of interest" description="Thiamine pyrophosphate binding">
    <location>
        <begin position="396"/>
        <end position="476"/>
    </location>
</feature>
<feature type="binding site" evidence="1">
    <location>
        <position position="47"/>
    </location>
    <ligand>
        <name>thiamine diphosphate</name>
        <dbReference type="ChEBI" id="CHEBI:58937"/>
    </ligand>
</feature>
<feature type="binding site" evidence="1">
    <location>
        <position position="149"/>
    </location>
    <ligand>
        <name>FAD</name>
        <dbReference type="ChEBI" id="CHEBI:57692"/>
    </ligand>
</feature>
<feature type="binding site" evidence="1">
    <location>
        <begin position="258"/>
        <end position="279"/>
    </location>
    <ligand>
        <name>FAD</name>
        <dbReference type="ChEBI" id="CHEBI:57692"/>
    </ligand>
</feature>
<feature type="binding site" evidence="1">
    <location>
        <begin position="301"/>
        <end position="320"/>
    </location>
    <ligand>
        <name>FAD</name>
        <dbReference type="ChEBI" id="CHEBI:57692"/>
    </ligand>
</feature>
<feature type="binding site" evidence="1">
    <location>
        <position position="447"/>
    </location>
    <ligand>
        <name>Mg(2+)</name>
        <dbReference type="ChEBI" id="CHEBI:18420"/>
    </ligand>
</feature>
<feature type="binding site" evidence="1">
    <location>
        <position position="474"/>
    </location>
    <ligand>
        <name>Mg(2+)</name>
        <dbReference type="ChEBI" id="CHEBI:18420"/>
    </ligand>
</feature>
<proteinExistence type="inferred from homology"/>
<protein>
    <recommendedName>
        <fullName>Probable acetolactate synthase large subunit</fullName>
        <shortName>AHAS</shortName>
        <ecNumber>2.2.1.6</ecNumber>
    </recommendedName>
    <alternativeName>
        <fullName>Acetohydroxy-acid synthase large subunit</fullName>
        <shortName>ALS</shortName>
    </alternativeName>
</protein>
<organism>
    <name type="scientific">Methanocaldococcus jannaschii (strain ATCC 43067 / DSM 2661 / JAL-1 / JCM 10045 / NBRC 100440)</name>
    <name type="common">Methanococcus jannaschii</name>
    <dbReference type="NCBI Taxonomy" id="243232"/>
    <lineage>
        <taxon>Archaea</taxon>
        <taxon>Methanobacteriati</taxon>
        <taxon>Methanobacteriota</taxon>
        <taxon>Methanomada group</taxon>
        <taxon>Methanococci</taxon>
        <taxon>Methanococcales</taxon>
        <taxon>Methanocaldococcaceae</taxon>
        <taxon>Methanocaldococcus</taxon>
    </lineage>
</organism>
<accession>Q57725</accession>
<comment type="catalytic activity">
    <reaction>
        <text>2 pyruvate + H(+) = (2S)-2-acetolactate + CO2</text>
        <dbReference type="Rhea" id="RHEA:25249"/>
        <dbReference type="ChEBI" id="CHEBI:15361"/>
        <dbReference type="ChEBI" id="CHEBI:15378"/>
        <dbReference type="ChEBI" id="CHEBI:16526"/>
        <dbReference type="ChEBI" id="CHEBI:58476"/>
        <dbReference type="EC" id="2.2.1.6"/>
    </reaction>
</comment>
<comment type="cofactor">
    <cofactor evidence="1">
        <name>Mg(2+)</name>
        <dbReference type="ChEBI" id="CHEBI:18420"/>
    </cofactor>
    <text evidence="1">Binds 1 Mg(2+) ion per subunit.</text>
</comment>
<comment type="cofactor">
    <cofactor evidence="1">
        <name>thiamine diphosphate</name>
        <dbReference type="ChEBI" id="CHEBI:58937"/>
    </cofactor>
    <text evidence="1">Binds 1 thiamine pyrophosphate per subunit.</text>
</comment>
<comment type="pathway">
    <text>Amino-acid biosynthesis; L-isoleucine biosynthesis; L-isoleucine from 2-oxobutanoate: step 1/4.</text>
</comment>
<comment type="pathway">
    <text>Amino-acid biosynthesis; L-valine biosynthesis; L-valine from pyruvate: step 1/4.</text>
</comment>
<comment type="subunit">
    <text evidence="1">Dimer of large and small chains.</text>
</comment>
<comment type="similarity">
    <text evidence="2">Belongs to the TPP enzyme family.</text>
</comment>
<sequence>MKGAEAIIKALEAEGVKIIFGYPGGAMLPFYDALYDSDLVHILTRHEQAAAHAADGFARASGEAGVCVSTSGPGATNLVTGIATAYADSSPVIALTGQVPTKLIGNDAFQEIDALGLFMPITKHNFQIKKPEEIPETFRAAFEIATTGRPGPVHIDLPKDVQDGEIDIEKYPIPAKVDLPGYKPKTVGHPLQIKKAAKLIAESERPVILAGGGVIISGASEELLRLAEFVKIPVCTTLMGKGCFPEDHPLALGMVGMHGTKAANYAVTECDVLIAIGCRFSDRVTGDIRYFAPEAKIIHIDIDPAEIGKNVRADIPIVGDAKNVLRDLLAALIALEIKDKETWLERIYELKKLSIPMMDFDDKPIKPQRFVKDLMEVLNEIDSKLKNTIITTDVGQNQMWMAHFFKTKMPRSFLASGGLGTMGFGFPAAIGAKVAKPYANVISITGDGGFLMNSQELATISEYDIPVVICIFDNRTLGMVYQWQNLYYGQRQSEVHLGESPDFVKLAESYGVKADRIISPDEIKEKLKEAILSNEPYLLDIVIDPAEALPMVPPGGRLTNIVQPIRVEPKIKKPQFDEIKKIRDMAAVKEF</sequence>
<gene>
    <name type="primary">ilvB</name>
    <name type="ordered locus">MJ0277</name>
</gene>
<dbReference type="EC" id="2.2.1.6"/>
<dbReference type="EMBL" id="L77117">
    <property type="protein sequence ID" value="AAB98265.1"/>
    <property type="molecule type" value="Genomic_DNA"/>
</dbReference>
<dbReference type="PIR" id="F64334">
    <property type="entry name" value="F64334"/>
</dbReference>
<dbReference type="RefSeq" id="WP_010869775.1">
    <property type="nucleotide sequence ID" value="NC_000909.1"/>
</dbReference>
<dbReference type="SMR" id="Q57725"/>
<dbReference type="FunCoup" id="Q57725">
    <property type="interactions" value="265"/>
</dbReference>
<dbReference type="STRING" id="243232.MJ_0277"/>
<dbReference type="PaxDb" id="243232-MJ_0277"/>
<dbReference type="EnsemblBacteria" id="AAB98265">
    <property type="protein sequence ID" value="AAB98265"/>
    <property type="gene ID" value="MJ_0277"/>
</dbReference>
<dbReference type="GeneID" id="1451132"/>
<dbReference type="KEGG" id="mja:MJ_0277"/>
<dbReference type="eggNOG" id="arCOG01998">
    <property type="taxonomic scope" value="Archaea"/>
</dbReference>
<dbReference type="HOGENOM" id="CLU_013748_1_3_2"/>
<dbReference type="InParanoid" id="Q57725"/>
<dbReference type="OrthoDB" id="6837at2157"/>
<dbReference type="PhylomeDB" id="Q57725"/>
<dbReference type="UniPathway" id="UPA00047">
    <property type="reaction ID" value="UER00055"/>
</dbReference>
<dbReference type="UniPathway" id="UPA00049">
    <property type="reaction ID" value="UER00059"/>
</dbReference>
<dbReference type="Proteomes" id="UP000000805">
    <property type="component" value="Chromosome"/>
</dbReference>
<dbReference type="GO" id="GO:0005948">
    <property type="term" value="C:acetolactate synthase complex"/>
    <property type="evidence" value="ECO:0000318"/>
    <property type="project" value="GO_Central"/>
</dbReference>
<dbReference type="GO" id="GO:0003984">
    <property type="term" value="F:acetolactate synthase activity"/>
    <property type="evidence" value="ECO:0000318"/>
    <property type="project" value="GO_Central"/>
</dbReference>
<dbReference type="GO" id="GO:0050660">
    <property type="term" value="F:flavin adenine dinucleotide binding"/>
    <property type="evidence" value="ECO:0000318"/>
    <property type="project" value="GO_Central"/>
</dbReference>
<dbReference type="GO" id="GO:0000287">
    <property type="term" value="F:magnesium ion binding"/>
    <property type="evidence" value="ECO:0007669"/>
    <property type="project" value="InterPro"/>
</dbReference>
<dbReference type="GO" id="GO:0030976">
    <property type="term" value="F:thiamine pyrophosphate binding"/>
    <property type="evidence" value="ECO:0007669"/>
    <property type="project" value="InterPro"/>
</dbReference>
<dbReference type="GO" id="GO:0009097">
    <property type="term" value="P:isoleucine biosynthetic process"/>
    <property type="evidence" value="ECO:0000318"/>
    <property type="project" value="GO_Central"/>
</dbReference>
<dbReference type="GO" id="GO:0009099">
    <property type="term" value="P:L-valine biosynthetic process"/>
    <property type="evidence" value="ECO:0000318"/>
    <property type="project" value="GO_Central"/>
</dbReference>
<dbReference type="GO" id="GO:0044272">
    <property type="term" value="P:sulfur compound biosynthetic process"/>
    <property type="evidence" value="ECO:0007669"/>
    <property type="project" value="UniProtKB-ARBA"/>
</dbReference>
<dbReference type="CDD" id="cd02015">
    <property type="entry name" value="TPP_AHAS"/>
    <property type="match status" value="1"/>
</dbReference>
<dbReference type="CDD" id="cd07035">
    <property type="entry name" value="TPP_PYR_POX_like"/>
    <property type="match status" value="1"/>
</dbReference>
<dbReference type="FunFam" id="3.40.50.1220:FF:000008">
    <property type="entry name" value="Acetolactate synthase"/>
    <property type="match status" value="1"/>
</dbReference>
<dbReference type="FunFam" id="3.40.50.970:FF:000007">
    <property type="entry name" value="Acetolactate synthase"/>
    <property type="match status" value="1"/>
</dbReference>
<dbReference type="Gene3D" id="3.40.50.970">
    <property type="match status" value="2"/>
</dbReference>
<dbReference type="Gene3D" id="3.40.50.1220">
    <property type="entry name" value="TPP-binding domain"/>
    <property type="match status" value="1"/>
</dbReference>
<dbReference type="InterPro" id="IPR012846">
    <property type="entry name" value="Acetolactate_synth_lsu"/>
</dbReference>
<dbReference type="InterPro" id="IPR039368">
    <property type="entry name" value="AHAS_TPP"/>
</dbReference>
<dbReference type="InterPro" id="IPR029035">
    <property type="entry name" value="DHS-like_NAD/FAD-binding_dom"/>
</dbReference>
<dbReference type="InterPro" id="IPR029061">
    <property type="entry name" value="THDP-binding"/>
</dbReference>
<dbReference type="InterPro" id="IPR012000">
    <property type="entry name" value="Thiamin_PyroP_enz_cen_dom"/>
</dbReference>
<dbReference type="InterPro" id="IPR012001">
    <property type="entry name" value="Thiamin_PyroP_enz_TPP-bd_dom"/>
</dbReference>
<dbReference type="InterPro" id="IPR000399">
    <property type="entry name" value="TPP-bd_CS"/>
</dbReference>
<dbReference type="InterPro" id="IPR045229">
    <property type="entry name" value="TPP_enz"/>
</dbReference>
<dbReference type="InterPro" id="IPR011766">
    <property type="entry name" value="TPP_enzyme_TPP-bd"/>
</dbReference>
<dbReference type="NCBIfam" id="TIGR00118">
    <property type="entry name" value="acolac_lg"/>
    <property type="match status" value="1"/>
</dbReference>
<dbReference type="NCBIfam" id="NF004919">
    <property type="entry name" value="PRK06276.1"/>
    <property type="match status" value="1"/>
</dbReference>
<dbReference type="PANTHER" id="PTHR18968:SF13">
    <property type="entry name" value="ACETOLACTATE SYNTHASE CATALYTIC SUBUNIT, MITOCHONDRIAL"/>
    <property type="match status" value="1"/>
</dbReference>
<dbReference type="PANTHER" id="PTHR18968">
    <property type="entry name" value="THIAMINE PYROPHOSPHATE ENZYMES"/>
    <property type="match status" value="1"/>
</dbReference>
<dbReference type="Pfam" id="PF02775">
    <property type="entry name" value="TPP_enzyme_C"/>
    <property type="match status" value="1"/>
</dbReference>
<dbReference type="Pfam" id="PF00205">
    <property type="entry name" value="TPP_enzyme_M"/>
    <property type="match status" value="1"/>
</dbReference>
<dbReference type="Pfam" id="PF02776">
    <property type="entry name" value="TPP_enzyme_N"/>
    <property type="match status" value="1"/>
</dbReference>
<dbReference type="SUPFAM" id="SSF52467">
    <property type="entry name" value="DHS-like NAD/FAD-binding domain"/>
    <property type="match status" value="1"/>
</dbReference>
<dbReference type="SUPFAM" id="SSF52518">
    <property type="entry name" value="Thiamin diphosphate-binding fold (THDP-binding)"/>
    <property type="match status" value="2"/>
</dbReference>
<dbReference type="PROSITE" id="PS00187">
    <property type="entry name" value="TPP_ENZYMES"/>
    <property type="match status" value="1"/>
</dbReference>
<keyword id="KW-0028">Amino-acid biosynthesis</keyword>
<keyword id="KW-0100">Branched-chain amino acid biosynthesis</keyword>
<keyword id="KW-0274">FAD</keyword>
<keyword id="KW-0285">Flavoprotein</keyword>
<keyword id="KW-0460">Magnesium</keyword>
<keyword id="KW-0479">Metal-binding</keyword>
<keyword id="KW-1185">Reference proteome</keyword>
<keyword id="KW-0786">Thiamine pyrophosphate</keyword>
<keyword id="KW-0808">Transferase</keyword>
<evidence type="ECO:0000250" key="1"/>
<evidence type="ECO:0000305" key="2"/>
<name>ILVB_METJA</name>
<reference key="1">
    <citation type="journal article" date="1996" name="Science">
        <title>Complete genome sequence of the methanogenic archaeon, Methanococcus jannaschii.</title>
        <authorList>
            <person name="Bult C.J."/>
            <person name="White O."/>
            <person name="Olsen G.J."/>
            <person name="Zhou L."/>
            <person name="Fleischmann R.D."/>
            <person name="Sutton G.G."/>
            <person name="Blake J.A."/>
            <person name="FitzGerald L.M."/>
            <person name="Clayton R.A."/>
            <person name="Gocayne J.D."/>
            <person name="Kerlavage A.R."/>
            <person name="Dougherty B.A."/>
            <person name="Tomb J.-F."/>
            <person name="Adams M.D."/>
            <person name="Reich C.I."/>
            <person name="Overbeek R."/>
            <person name="Kirkness E.F."/>
            <person name="Weinstock K.G."/>
            <person name="Merrick J.M."/>
            <person name="Glodek A."/>
            <person name="Scott J.L."/>
            <person name="Geoghagen N.S.M."/>
            <person name="Weidman J.F."/>
            <person name="Fuhrmann J.L."/>
            <person name="Nguyen D."/>
            <person name="Utterback T.R."/>
            <person name="Kelley J.M."/>
            <person name="Peterson J.D."/>
            <person name="Sadow P.W."/>
            <person name="Hanna M.C."/>
            <person name="Cotton M.D."/>
            <person name="Roberts K.M."/>
            <person name="Hurst M.A."/>
            <person name="Kaine B.P."/>
            <person name="Borodovsky M."/>
            <person name="Klenk H.-P."/>
            <person name="Fraser C.M."/>
            <person name="Smith H.O."/>
            <person name="Woese C.R."/>
            <person name="Venter J.C."/>
        </authorList>
    </citation>
    <scope>NUCLEOTIDE SEQUENCE [LARGE SCALE GENOMIC DNA]</scope>
    <source>
        <strain>ATCC 43067 / DSM 2661 / JAL-1 / JCM 10045 / NBRC 100440</strain>
    </source>
</reference>